<proteinExistence type="inferred from homology"/>
<keyword id="KW-0028">Amino-acid biosynthesis</keyword>
<keyword id="KW-0055">Arginine biosynthesis</keyword>
<keyword id="KW-0963">Cytoplasm</keyword>
<keyword id="KW-1185">Reference proteome</keyword>
<keyword id="KW-0808">Transferase</keyword>
<feature type="chain" id="PRO_0000113066" description="Ornithine carbamoyltransferase">
    <location>
        <begin position="1"/>
        <end position="312"/>
    </location>
</feature>
<feature type="binding site" evidence="2">
    <location>
        <begin position="59"/>
        <end position="62"/>
    </location>
    <ligand>
        <name>carbamoyl phosphate</name>
        <dbReference type="ChEBI" id="CHEBI:58228"/>
    </ligand>
</feature>
<feature type="binding site" evidence="2">
    <location>
        <position position="86"/>
    </location>
    <ligand>
        <name>carbamoyl phosphate</name>
        <dbReference type="ChEBI" id="CHEBI:58228"/>
    </ligand>
</feature>
<feature type="binding site" evidence="2">
    <location>
        <position position="110"/>
    </location>
    <ligand>
        <name>carbamoyl phosphate</name>
        <dbReference type="ChEBI" id="CHEBI:58228"/>
    </ligand>
</feature>
<feature type="binding site" evidence="2">
    <location>
        <begin position="137"/>
        <end position="140"/>
    </location>
    <ligand>
        <name>carbamoyl phosphate</name>
        <dbReference type="ChEBI" id="CHEBI:58228"/>
    </ligand>
</feature>
<feature type="binding site" evidence="2">
    <location>
        <position position="167"/>
    </location>
    <ligand>
        <name>L-ornithine</name>
        <dbReference type="ChEBI" id="CHEBI:46911"/>
    </ligand>
</feature>
<feature type="binding site" evidence="2">
    <location>
        <position position="231"/>
    </location>
    <ligand>
        <name>L-ornithine</name>
        <dbReference type="ChEBI" id="CHEBI:46911"/>
    </ligand>
</feature>
<feature type="binding site" evidence="2">
    <location>
        <begin position="235"/>
        <end position="236"/>
    </location>
    <ligand>
        <name>L-ornithine</name>
        <dbReference type="ChEBI" id="CHEBI:46911"/>
    </ligand>
</feature>
<feature type="binding site" evidence="3">
    <location>
        <position position="271"/>
    </location>
    <ligand>
        <name>carbamoyl phosphate</name>
        <dbReference type="ChEBI" id="CHEBI:58228"/>
    </ligand>
</feature>
<feature type="binding site" evidence="2">
    <location>
        <position position="299"/>
    </location>
    <ligand>
        <name>carbamoyl phosphate</name>
        <dbReference type="ChEBI" id="CHEBI:58228"/>
    </ligand>
</feature>
<protein>
    <recommendedName>
        <fullName evidence="2">Ornithine carbamoyltransferase</fullName>
        <shortName evidence="2">OTCase</shortName>
        <ecNumber evidence="2">2.1.3.3</ecNumber>
    </recommendedName>
</protein>
<organism>
    <name type="scientific">Methanopyrus kandleri (strain AV19 / DSM 6324 / JCM 9639 / NBRC 100938)</name>
    <dbReference type="NCBI Taxonomy" id="190192"/>
    <lineage>
        <taxon>Archaea</taxon>
        <taxon>Methanobacteriati</taxon>
        <taxon>Methanobacteriota</taxon>
        <taxon>Methanomada group</taxon>
        <taxon>Methanopyri</taxon>
        <taxon>Methanopyrales</taxon>
        <taxon>Methanopyraceae</taxon>
        <taxon>Methanopyrus</taxon>
    </lineage>
</organism>
<sequence length="312" mass="35494">MRLKRLSTNHLLSIADLDREDVETVLRVAERFKERYLAGERVIPILEGKTLGLIFEKPSTRTRVSFEVAMHQLGGQAFTYTKQELQLGRGEAIKDTAAVLSRYLDGVMIRARRHEDIEEFARYSEVPVINGLSDLEHPCQALTDAFTIREKLGRGPHTVAFVGDGNNVCSSLALVCATLGWDFVHAVPEGYECPDRVWREVERRAEESGSETRVVRDPKEAVREADVVYTDVWVSMGDEAEREERLRVFRPYQVNEELMSHAPEHAIVMHCMPIQRGYELTDDVADSERSVIYDQAENRLHVQKAILALLMG</sequence>
<reference key="1">
    <citation type="journal article" date="2002" name="Proc. Natl. Acad. Sci. U.S.A.">
        <title>The complete genome of hyperthermophile Methanopyrus kandleri AV19 and monophyly of archaeal methanogens.</title>
        <authorList>
            <person name="Slesarev A.I."/>
            <person name="Mezhevaya K.V."/>
            <person name="Makarova K.S."/>
            <person name="Polushin N.N."/>
            <person name="Shcherbinina O.V."/>
            <person name="Shakhova V.V."/>
            <person name="Belova G.I."/>
            <person name="Aravind L."/>
            <person name="Natale D.A."/>
            <person name="Rogozin I.B."/>
            <person name="Tatusov R.L."/>
            <person name="Wolf Y.I."/>
            <person name="Stetter K.O."/>
            <person name="Malykh A.G."/>
            <person name="Koonin E.V."/>
            <person name="Kozyavkin S.A."/>
        </authorList>
    </citation>
    <scope>NUCLEOTIDE SEQUENCE [LARGE SCALE GENOMIC DNA]</scope>
    <source>
        <strain>AV19 / DSM 6324 / JCM 9639 / NBRC 100938</strain>
    </source>
</reference>
<evidence type="ECO:0000250" key="1"/>
<evidence type="ECO:0000255" key="2">
    <source>
        <dbReference type="HAMAP-Rule" id="MF_01109"/>
    </source>
</evidence>
<evidence type="ECO:0000305" key="3"/>
<name>OTC_METKA</name>
<accession>Q8TWG4</accession>
<dbReference type="EC" id="2.1.3.3" evidence="2"/>
<dbReference type="EMBL" id="AE009439">
    <property type="protein sequence ID" value="AAM02283.1"/>
    <property type="molecule type" value="Genomic_DNA"/>
</dbReference>
<dbReference type="RefSeq" id="WP_011019438.1">
    <property type="nucleotide sequence ID" value="NC_003551.1"/>
</dbReference>
<dbReference type="SMR" id="Q8TWG4"/>
<dbReference type="FunCoup" id="Q8TWG4">
    <property type="interactions" value="182"/>
</dbReference>
<dbReference type="STRING" id="190192.MK1070"/>
<dbReference type="PaxDb" id="190192-MK1070"/>
<dbReference type="EnsemblBacteria" id="AAM02283">
    <property type="protein sequence ID" value="AAM02283"/>
    <property type="gene ID" value="MK1070"/>
</dbReference>
<dbReference type="GeneID" id="1477171"/>
<dbReference type="KEGG" id="mka:MK1070"/>
<dbReference type="PATRIC" id="fig|190192.8.peg.1124"/>
<dbReference type="HOGENOM" id="CLU_043846_3_2_2"/>
<dbReference type="InParanoid" id="Q8TWG4"/>
<dbReference type="OrthoDB" id="4696at2157"/>
<dbReference type="UniPathway" id="UPA00068">
    <property type="reaction ID" value="UER00112"/>
</dbReference>
<dbReference type="Proteomes" id="UP000001826">
    <property type="component" value="Chromosome"/>
</dbReference>
<dbReference type="GO" id="GO:0005737">
    <property type="term" value="C:cytoplasm"/>
    <property type="evidence" value="ECO:0007669"/>
    <property type="project" value="UniProtKB-SubCell"/>
</dbReference>
<dbReference type="GO" id="GO:0016597">
    <property type="term" value="F:amino acid binding"/>
    <property type="evidence" value="ECO:0007669"/>
    <property type="project" value="InterPro"/>
</dbReference>
<dbReference type="GO" id="GO:0004585">
    <property type="term" value="F:ornithine carbamoyltransferase activity"/>
    <property type="evidence" value="ECO:0007669"/>
    <property type="project" value="UniProtKB-UniRule"/>
</dbReference>
<dbReference type="GO" id="GO:0042450">
    <property type="term" value="P:arginine biosynthetic process via ornithine"/>
    <property type="evidence" value="ECO:0007669"/>
    <property type="project" value="TreeGrafter"/>
</dbReference>
<dbReference type="GO" id="GO:0019240">
    <property type="term" value="P:citrulline biosynthetic process"/>
    <property type="evidence" value="ECO:0007669"/>
    <property type="project" value="TreeGrafter"/>
</dbReference>
<dbReference type="GO" id="GO:0006526">
    <property type="term" value="P:L-arginine biosynthetic process"/>
    <property type="evidence" value="ECO:0007669"/>
    <property type="project" value="UniProtKB-UniRule"/>
</dbReference>
<dbReference type="FunFam" id="3.40.50.1370:FF:000008">
    <property type="entry name" value="Ornithine carbamoyltransferase"/>
    <property type="match status" value="1"/>
</dbReference>
<dbReference type="Gene3D" id="3.40.50.1370">
    <property type="entry name" value="Aspartate/ornithine carbamoyltransferase"/>
    <property type="match status" value="2"/>
</dbReference>
<dbReference type="HAMAP" id="MF_01109">
    <property type="entry name" value="OTCase"/>
    <property type="match status" value="1"/>
</dbReference>
<dbReference type="InterPro" id="IPR006132">
    <property type="entry name" value="Asp/Orn_carbamoyltranf_P-bd"/>
</dbReference>
<dbReference type="InterPro" id="IPR006130">
    <property type="entry name" value="Asp/Orn_carbamoylTrfase"/>
</dbReference>
<dbReference type="InterPro" id="IPR036901">
    <property type="entry name" value="Asp/Orn_carbamoylTrfase_sf"/>
</dbReference>
<dbReference type="InterPro" id="IPR006131">
    <property type="entry name" value="Asp_carbamoyltransf_Asp/Orn-bd"/>
</dbReference>
<dbReference type="InterPro" id="IPR002292">
    <property type="entry name" value="Orn/put_carbamltrans"/>
</dbReference>
<dbReference type="InterPro" id="IPR024904">
    <property type="entry name" value="OTCase_ArgI"/>
</dbReference>
<dbReference type="NCBIfam" id="TIGR00658">
    <property type="entry name" value="orni_carb_tr"/>
    <property type="match status" value="1"/>
</dbReference>
<dbReference type="NCBIfam" id="NF001986">
    <property type="entry name" value="PRK00779.1"/>
    <property type="match status" value="1"/>
</dbReference>
<dbReference type="PANTHER" id="PTHR45753">
    <property type="entry name" value="ORNITHINE CARBAMOYLTRANSFERASE, MITOCHONDRIAL"/>
    <property type="match status" value="1"/>
</dbReference>
<dbReference type="PANTHER" id="PTHR45753:SF3">
    <property type="entry name" value="ORNITHINE TRANSCARBAMYLASE, MITOCHONDRIAL"/>
    <property type="match status" value="1"/>
</dbReference>
<dbReference type="Pfam" id="PF00185">
    <property type="entry name" value="OTCace"/>
    <property type="match status" value="1"/>
</dbReference>
<dbReference type="Pfam" id="PF02729">
    <property type="entry name" value="OTCace_N"/>
    <property type="match status" value="1"/>
</dbReference>
<dbReference type="PRINTS" id="PR00100">
    <property type="entry name" value="AOTCASE"/>
</dbReference>
<dbReference type="PRINTS" id="PR00102">
    <property type="entry name" value="OTCASE"/>
</dbReference>
<dbReference type="SUPFAM" id="SSF53671">
    <property type="entry name" value="Aspartate/ornithine carbamoyltransferase"/>
    <property type="match status" value="1"/>
</dbReference>
<dbReference type="PROSITE" id="PS00097">
    <property type="entry name" value="CARBAMOYLTRANSFERASE"/>
    <property type="match status" value="1"/>
</dbReference>
<comment type="function">
    <text evidence="1">Reversibly catalyzes the transfer of the carbamoyl group from carbamoyl phosphate (CP) to the N(epsilon) atom of ornithine (ORN) to produce L-citrulline.</text>
</comment>
<comment type="catalytic activity">
    <reaction evidence="2">
        <text>carbamoyl phosphate + L-ornithine = L-citrulline + phosphate + H(+)</text>
        <dbReference type="Rhea" id="RHEA:19513"/>
        <dbReference type="ChEBI" id="CHEBI:15378"/>
        <dbReference type="ChEBI" id="CHEBI:43474"/>
        <dbReference type="ChEBI" id="CHEBI:46911"/>
        <dbReference type="ChEBI" id="CHEBI:57743"/>
        <dbReference type="ChEBI" id="CHEBI:58228"/>
        <dbReference type="EC" id="2.1.3.3"/>
    </reaction>
</comment>
<comment type="pathway">
    <text evidence="2">Amino-acid biosynthesis; L-arginine biosynthesis; L-arginine from L-ornithine and carbamoyl phosphate: step 1/3.</text>
</comment>
<comment type="subcellular location">
    <subcellularLocation>
        <location evidence="2">Cytoplasm</location>
    </subcellularLocation>
</comment>
<comment type="similarity">
    <text evidence="2">Belongs to the aspartate/ornithine carbamoyltransferase superfamily. OTCase family.</text>
</comment>
<comment type="caution">
    <text evidence="3">Lacks the conserved leucine residue in position 272, which is part of the ornithine binding site; it is replaced by a methionine residue.</text>
</comment>
<gene>
    <name evidence="2" type="primary">argF</name>
    <name type="ordered locus">MK1070</name>
</gene>